<protein>
    <recommendedName>
        <fullName>Pre-mRNA-splicing ATP-dependent RNA helicase prp28</fullName>
        <ecNumber>3.6.4.13</ecNumber>
    </recommendedName>
</protein>
<proteinExistence type="inferred from homology"/>
<accession>Q9Y7T7</accession>
<dbReference type="EC" id="3.6.4.13"/>
<dbReference type="EMBL" id="CU329672">
    <property type="protein sequence ID" value="CAB40015.1"/>
    <property type="molecule type" value="Genomic_DNA"/>
</dbReference>
<dbReference type="PIR" id="T41512">
    <property type="entry name" value="T41512"/>
</dbReference>
<dbReference type="RefSeq" id="NP_587984.1">
    <property type="nucleotide sequence ID" value="NM_001022975.2"/>
</dbReference>
<dbReference type="SMR" id="Q9Y7T7"/>
<dbReference type="BioGRID" id="275312">
    <property type="interactions" value="4"/>
</dbReference>
<dbReference type="FunCoup" id="Q9Y7T7">
    <property type="interactions" value="704"/>
</dbReference>
<dbReference type="STRING" id="284812.Q9Y7T7"/>
<dbReference type="iPTMnet" id="Q9Y7T7"/>
<dbReference type="PaxDb" id="4896-SPCC63.11.1"/>
<dbReference type="EnsemblFungi" id="SPCC63.11.1">
    <property type="protein sequence ID" value="SPCC63.11.1:pep"/>
    <property type="gene ID" value="SPCC63.11"/>
</dbReference>
<dbReference type="GeneID" id="2538728"/>
<dbReference type="KEGG" id="spo:2538728"/>
<dbReference type="PomBase" id="SPCC63.11">
    <property type="gene designation" value="prp28"/>
</dbReference>
<dbReference type="VEuPathDB" id="FungiDB:SPCC63.11"/>
<dbReference type="eggNOG" id="KOG0333">
    <property type="taxonomic scope" value="Eukaryota"/>
</dbReference>
<dbReference type="HOGENOM" id="CLU_003041_11_3_1"/>
<dbReference type="InParanoid" id="Q9Y7T7"/>
<dbReference type="OMA" id="ARDIKHM"/>
<dbReference type="PhylomeDB" id="Q9Y7T7"/>
<dbReference type="PRO" id="PR:Q9Y7T7"/>
<dbReference type="Proteomes" id="UP000002485">
    <property type="component" value="Chromosome III"/>
</dbReference>
<dbReference type="GO" id="GO:0071013">
    <property type="term" value="C:catalytic step 2 spliceosome"/>
    <property type="evidence" value="ECO:0000318"/>
    <property type="project" value="GO_Central"/>
</dbReference>
<dbReference type="GO" id="GO:0005737">
    <property type="term" value="C:cytoplasm"/>
    <property type="evidence" value="ECO:0007669"/>
    <property type="project" value="UniProtKB-SubCell"/>
</dbReference>
<dbReference type="GO" id="GO:0005634">
    <property type="term" value="C:nucleus"/>
    <property type="evidence" value="ECO:0007005"/>
    <property type="project" value="PomBase"/>
</dbReference>
<dbReference type="GO" id="GO:0005682">
    <property type="term" value="C:U5 snRNP"/>
    <property type="evidence" value="ECO:0000266"/>
    <property type="project" value="PomBase"/>
</dbReference>
<dbReference type="GO" id="GO:0005524">
    <property type="term" value="F:ATP binding"/>
    <property type="evidence" value="ECO:0007669"/>
    <property type="project" value="UniProtKB-KW"/>
</dbReference>
<dbReference type="GO" id="GO:0016887">
    <property type="term" value="F:ATP hydrolysis activity"/>
    <property type="evidence" value="ECO:0007669"/>
    <property type="project" value="RHEA"/>
</dbReference>
<dbReference type="GO" id="GO:0003729">
    <property type="term" value="F:mRNA binding"/>
    <property type="evidence" value="ECO:0000318"/>
    <property type="project" value="GO_Central"/>
</dbReference>
<dbReference type="GO" id="GO:0003724">
    <property type="term" value="F:RNA helicase activity"/>
    <property type="evidence" value="ECO:0000250"/>
    <property type="project" value="PomBase"/>
</dbReference>
<dbReference type="GO" id="GO:0000354">
    <property type="term" value="P:cis assembly of pre-catalytic spliceosome"/>
    <property type="evidence" value="ECO:0000250"/>
    <property type="project" value="PomBase"/>
</dbReference>
<dbReference type="GO" id="GO:0000398">
    <property type="term" value="P:mRNA splicing, via spliceosome"/>
    <property type="evidence" value="ECO:0000318"/>
    <property type="project" value="GO_Central"/>
</dbReference>
<dbReference type="CDD" id="cd17945">
    <property type="entry name" value="DEADc_DDX23"/>
    <property type="match status" value="1"/>
</dbReference>
<dbReference type="CDD" id="cd18787">
    <property type="entry name" value="SF2_C_DEAD"/>
    <property type="match status" value="1"/>
</dbReference>
<dbReference type="FunFam" id="3.40.50.300:FF:000322">
    <property type="entry name" value="probable ATP-dependent RNA helicase DDX23"/>
    <property type="match status" value="1"/>
</dbReference>
<dbReference type="Gene3D" id="3.40.50.300">
    <property type="entry name" value="P-loop containing nucleotide triphosphate hydrolases"/>
    <property type="match status" value="2"/>
</dbReference>
<dbReference type="InterPro" id="IPR011545">
    <property type="entry name" value="DEAD/DEAH_box_helicase_dom"/>
</dbReference>
<dbReference type="InterPro" id="IPR014001">
    <property type="entry name" value="Helicase_ATP-bd"/>
</dbReference>
<dbReference type="InterPro" id="IPR001650">
    <property type="entry name" value="Helicase_C-like"/>
</dbReference>
<dbReference type="InterPro" id="IPR027417">
    <property type="entry name" value="P-loop_NTPase"/>
</dbReference>
<dbReference type="InterPro" id="IPR000629">
    <property type="entry name" value="RNA-helicase_DEAD-box_CS"/>
</dbReference>
<dbReference type="InterPro" id="IPR014014">
    <property type="entry name" value="RNA_helicase_DEAD_Q_motif"/>
</dbReference>
<dbReference type="PANTHER" id="PTHR47958">
    <property type="entry name" value="ATP-DEPENDENT RNA HELICASE DBP3"/>
    <property type="match status" value="1"/>
</dbReference>
<dbReference type="Pfam" id="PF25430">
    <property type="entry name" value="DDX23"/>
    <property type="match status" value="1"/>
</dbReference>
<dbReference type="Pfam" id="PF00270">
    <property type="entry name" value="DEAD"/>
    <property type="match status" value="1"/>
</dbReference>
<dbReference type="Pfam" id="PF00271">
    <property type="entry name" value="Helicase_C"/>
    <property type="match status" value="1"/>
</dbReference>
<dbReference type="SMART" id="SM00487">
    <property type="entry name" value="DEXDc"/>
    <property type="match status" value="1"/>
</dbReference>
<dbReference type="SMART" id="SM00490">
    <property type="entry name" value="HELICc"/>
    <property type="match status" value="1"/>
</dbReference>
<dbReference type="SUPFAM" id="SSF52540">
    <property type="entry name" value="P-loop containing nucleoside triphosphate hydrolases"/>
    <property type="match status" value="1"/>
</dbReference>
<dbReference type="PROSITE" id="PS00039">
    <property type="entry name" value="DEAD_ATP_HELICASE"/>
    <property type="match status" value="1"/>
</dbReference>
<dbReference type="PROSITE" id="PS51192">
    <property type="entry name" value="HELICASE_ATP_BIND_1"/>
    <property type="match status" value="1"/>
</dbReference>
<dbReference type="PROSITE" id="PS51194">
    <property type="entry name" value="HELICASE_CTER"/>
    <property type="match status" value="1"/>
</dbReference>
<dbReference type="PROSITE" id="PS51195">
    <property type="entry name" value="Q_MOTIF"/>
    <property type="match status" value="1"/>
</dbReference>
<reference key="1">
    <citation type="journal article" date="2002" name="Nature">
        <title>The genome sequence of Schizosaccharomyces pombe.</title>
        <authorList>
            <person name="Wood V."/>
            <person name="Gwilliam R."/>
            <person name="Rajandream M.A."/>
            <person name="Lyne M.H."/>
            <person name="Lyne R."/>
            <person name="Stewart A."/>
            <person name="Sgouros J.G."/>
            <person name="Peat N."/>
            <person name="Hayles J."/>
            <person name="Baker S.G."/>
            <person name="Basham D."/>
            <person name="Bowman S."/>
            <person name="Brooks K."/>
            <person name="Brown D."/>
            <person name="Brown S."/>
            <person name="Chillingworth T."/>
            <person name="Churcher C.M."/>
            <person name="Collins M."/>
            <person name="Connor R."/>
            <person name="Cronin A."/>
            <person name="Davis P."/>
            <person name="Feltwell T."/>
            <person name="Fraser A."/>
            <person name="Gentles S."/>
            <person name="Goble A."/>
            <person name="Hamlin N."/>
            <person name="Harris D.E."/>
            <person name="Hidalgo J."/>
            <person name="Hodgson G."/>
            <person name="Holroyd S."/>
            <person name="Hornsby T."/>
            <person name="Howarth S."/>
            <person name="Huckle E.J."/>
            <person name="Hunt S."/>
            <person name="Jagels K."/>
            <person name="James K.D."/>
            <person name="Jones L."/>
            <person name="Jones M."/>
            <person name="Leather S."/>
            <person name="McDonald S."/>
            <person name="McLean J."/>
            <person name="Mooney P."/>
            <person name="Moule S."/>
            <person name="Mungall K.L."/>
            <person name="Murphy L.D."/>
            <person name="Niblett D."/>
            <person name="Odell C."/>
            <person name="Oliver K."/>
            <person name="O'Neil S."/>
            <person name="Pearson D."/>
            <person name="Quail M.A."/>
            <person name="Rabbinowitsch E."/>
            <person name="Rutherford K.M."/>
            <person name="Rutter S."/>
            <person name="Saunders D."/>
            <person name="Seeger K."/>
            <person name="Sharp S."/>
            <person name="Skelton J."/>
            <person name="Simmonds M.N."/>
            <person name="Squares R."/>
            <person name="Squares S."/>
            <person name="Stevens K."/>
            <person name="Taylor K."/>
            <person name="Taylor R.G."/>
            <person name="Tivey A."/>
            <person name="Walsh S.V."/>
            <person name="Warren T."/>
            <person name="Whitehead S."/>
            <person name="Woodward J.R."/>
            <person name="Volckaert G."/>
            <person name="Aert R."/>
            <person name="Robben J."/>
            <person name="Grymonprez B."/>
            <person name="Weltjens I."/>
            <person name="Vanstreels E."/>
            <person name="Rieger M."/>
            <person name="Schaefer M."/>
            <person name="Mueller-Auer S."/>
            <person name="Gabel C."/>
            <person name="Fuchs M."/>
            <person name="Duesterhoeft A."/>
            <person name="Fritzc C."/>
            <person name="Holzer E."/>
            <person name="Moestl D."/>
            <person name="Hilbert H."/>
            <person name="Borzym K."/>
            <person name="Langer I."/>
            <person name="Beck A."/>
            <person name="Lehrach H."/>
            <person name="Reinhardt R."/>
            <person name="Pohl T.M."/>
            <person name="Eger P."/>
            <person name="Zimmermann W."/>
            <person name="Wedler H."/>
            <person name="Wambutt R."/>
            <person name="Purnelle B."/>
            <person name="Goffeau A."/>
            <person name="Cadieu E."/>
            <person name="Dreano S."/>
            <person name="Gloux S."/>
            <person name="Lelaure V."/>
            <person name="Mottier S."/>
            <person name="Galibert F."/>
            <person name="Aves S.J."/>
            <person name="Xiang Z."/>
            <person name="Hunt C."/>
            <person name="Moore K."/>
            <person name="Hurst S.M."/>
            <person name="Lucas M."/>
            <person name="Rochet M."/>
            <person name="Gaillardin C."/>
            <person name="Tallada V.A."/>
            <person name="Garzon A."/>
            <person name="Thode G."/>
            <person name="Daga R.R."/>
            <person name="Cruzado L."/>
            <person name="Jimenez J."/>
            <person name="Sanchez M."/>
            <person name="del Rey F."/>
            <person name="Benito J."/>
            <person name="Dominguez A."/>
            <person name="Revuelta J.L."/>
            <person name="Moreno S."/>
            <person name="Armstrong J."/>
            <person name="Forsburg S.L."/>
            <person name="Cerutti L."/>
            <person name="Lowe T."/>
            <person name="McCombie W.R."/>
            <person name="Paulsen I."/>
            <person name="Potashkin J."/>
            <person name="Shpakovski G.V."/>
            <person name="Ussery D."/>
            <person name="Barrell B.G."/>
            <person name="Nurse P."/>
        </authorList>
    </citation>
    <scope>NUCLEOTIDE SEQUENCE [LARGE SCALE GENOMIC DNA]</scope>
    <source>
        <strain>972 / ATCC 24843</strain>
    </source>
</reference>
<comment type="function">
    <text evidence="1">ATP-dependent RNA helicase involved in mRNA splicing. May destabilize the U1/5'-splice site duplex to permit an effective competition for the 5'-splice site by the U6 snRNA, resulting in the switch between U1 and U6 at the 5'-splice site. May also act to unwind the U4/U6 base-pairing interaction in the U4/U6/U5 snRNP, facilitating the first covalent step of splicing (By similarity).</text>
</comment>
<comment type="catalytic activity">
    <reaction>
        <text>ATP + H2O = ADP + phosphate + H(+)</text>
        <dbReference type="Rhea" id="RHEA:13065"/>
        <dbReference type="ChEBI" id="CHEBI:15377"/>
        <dbReference type="ChEBI" id="CHEBI:15378"/>
        <dbReference type="ChEBI" id="CHEBI:30616"/>
        <dbReference type="ChEBI" id="CHEBI:43474"/>
        <dbReference type="ChEBI" id="CHEBI:456216"/>
        <dbReference type="EC" id="3.6.4.13"/>
    </reaction>
</comment>
<comment type="subunit">
    <text evidence="1">Component of the U5 snRNP complex.</text>
</comment>
<comment type="subcellular location">
    <subcellularLocation>
        <location evidence="1">Cytoplasm</location>
    </subcellularLocation>
    <subcellularLocation>
        <location evidence="1">Nucleus</location>
    </subcellularLocation>
</comment>
<comment type="domain">
    <text>The Q motif is unique to and characteristic of the DEAD box family of RNA helicases and controls ATP binding and hydrolysis.</text>
</comment>
<comment type="similarity">
    <text evidence="5">Belongs to the DEAD box helicase family. DDX23/PRP28 subfamily.</text>
</comment>
<keyword id="KW-0067">ATP-binding</keyword>
<keyword id="KW-0963">Cytoplasm</keyword>
<keyword id="KW-0347">Helicase</keyword>
<keyword id="KW-0378">Hydrolase</keyword>
<keyword id="KW-0507">mRNA processing</keyword>
<keyword id="KW-0508">mRNA splicing</keyword>
<keyword id="KW-0547">Nucleotide-binding</keyword>
<keyword id="KW-0539">Nucleus</keyword>
<keyword id="KW-1185">Reference proteome</keyword>
<gene>
    <name type="primary">prp28</name>
    <name type="ORF">SPCC63.11</name>
</gene>
<organism>
    <name type="scientific">Schizosaccharomyces pombe (strain 972 / ATCC 24843)</name>
    <name type="common">Fission yeast</name>
    <dbReference type="NCBI Taxonomy" id="284812"/>
    <lineage>
        <taxon>Eukaryota</taxon>
        <taxon>Fungi</taxon>
        <taxon>Dikarya</taxon>
        <taxon>Ascomycota</taxon>
        <taxon>Taphrinomycotina</taxon>
        <taxon>Schizosaccharomycetes</taxon>
        <taxon>Schizosaccharomycetales</taxon>
        <taxon>Schizosaccharomycetaceae</taxon>
        <taxon>Schizosaccharomyces</taxon>
    </lineage>
</organism>
<sequence length="662" mass="74224">MTAQDSIPSLEQLVQQKRVKEEKAARPKFLSKAERARLALERRQKEVEEAKAKQNDKLLDLRKRTFTNHLENNELADDEKKSQVSSVSSNNSGTESSATDEAFSMTIRQRYMGIKPPVVKKRRRNADKKFVFDWDATDDTMKDAETSASPEATIAVFGRGKLGGFDDQSIRKAKSNSGLIQRLLQGTEQDKARAHELIQLQEKRAKKIDWDDVPWREKPLEAMKPRDWRILKEDYNISIKGDDLPNPLRNWEEAGLPSEMLKVLKKVNYKEPSSIQRAAIPVLLQRKDLIGIAETGSGKTAAFIIPLIIAISKLPPLTESNMHLGPYAVVLAPTRELAQQIQVEGNKFAEPLGFRCVSVVGGHAFEEQSFQMSQGAHIVVATPGRLLDCLERRLFVLSQCTYVVMDEADRMLDMGFEDDVNKILSSLPSSNASEKDGSILATANSSSSRRQTIMFSATLPPRVANLAKSYLIEPVMLTIGNIGQAVDRVEQRVEMISDDSKKWRRVEEILESNRFSPPIIIFVNLKRNIEAIAKQLNAIGWHAVTLHGSKSQEQRERAIEQLRNKTADILVATDIAGRGIDIPNVSLVLNYNMAKSIEDYTHRIGRTGRAGKSGTAITFLGPEDTDVYYDLRVLLSRSAKAHIPDELRNHEAAFVRHAAITQ</sequence>
<name>PRP28_SCHPO</name>
<evidence type="ECO:0000250" key="1"/>
<evidence type="ECO:0000255" key="2">
    <source>
        <dbReference type="PROSITE-ProRule" id="PRU00541"/>
    </source>
</evidence>
<evidence type="ECO:0000255" key="3">
    <source>
        <dbReference type="PROSITE-ProRule" id="PRU00542"/>
    </source>
</evidence>
<evidence type="ECO:0000256" key="4">
    <source>
        <dbReference type="SAM" id="MobiDB-lite"/>
    </source>
</evidence>
<evidence type="ECO:0000305" key="5"/>
<feature type="chain" id="PRO_0000232377" description="Pre-mRNA-splicing ATP-dependent RNA helicase prp28">
    <location>
        <begin position="1"/>
        <end position="662"/>
    </location>
</feature>
<feature type="domain" description="Helicase ATP-binding" evidence="2">
    <location>
        <begin position="280"/>
        <end position="477"/>
    </location>
</feature>
<feature type="domain" description="Helicase C-terminal" evidence="3">
    <location>
        <begin position="488"/>
        <end position="651"/>
    </location>
</feature>
<feature type="region of interest" description="Disordered" evidence="4">
    <location>
        <begin position="70"/>
        <end position="101"/>
    </location>
</feature>
<feature type="short sequence motif" description="Q motif">
    <location>
        <begin position="249"/>
        <end position="277"/>
    </location>
</feature>
<feature type="short sequence motif" description="DEAD box">
    <location>
        <begin position="406"/>
        <end position="409"/>
    </location>
</feature>
<feature type="compositionally biased region" description="Low complexity" evidence="4">
    <location>
        <begin position="83"/>
        <end position="97"/>
    </location>
</feature>
<feature type="binding site" evidence="2">
    <location>
        <begin position="293"/>
        <end position="300"/>
    </location>
    <ligand>
        <name>ATP</name>
        <dbReference type="ChEBI" id="CHEBI:30616"/>
    </ligand>
</feature>